<dbReference type="EC" id="2.8.1.13" evidence="1"/>
<dbReference type="EMBL" id="AM263198">
    <property type="protein sequence ID" value="CAK20943.1"/>
    <property type="molecule type" value="Genomic_DNA"/>
</dbReference>
<dbReference type="RefSeq" id="WP_011702315.1">
    <property type="nucleotide sequence ID" value="NC_008555.1"/>
</dbReference>
<dbReference type="SMR" id="A0AIW1"/>
<dbReference type="STRING" id="386043.lwe1525"/>
<dbReference type="GeneID" id="61189401"/>
<dbReference type="KEGG" id="lwe:lwe1525"/>
<dbReference type="eggNOG" id="COG0482">
    <property type="taxonomic scope" value="Bacteria"/>
</dbReference>
<dbReference type="HOGENOM" id="CLU_035188_1_0_9"/>
<dbReference type="OrthoDB" id="9800696at2"/>
<dbReference type="Proteomes" id="UP000000779">
    <property type="component" value="Chromosome"/>
</dbReference>
<dbReference type="GO" id="GO:0005737">
    <property type="term" value="C:cytoplasm"/>
    <property type="evidence" value="ECO:0007669"/>
    <property type="project" value="UniProtKB-SubCell"/>
</dbReference>
<dbReference type="GO" id="GO:0005524">
    <property type="term" value="F:ATP binding"/>
    <property type="evidence" value="ECO:0007669"/>
    <property type="project" value="UniProtKB-KW"/>
</dbReference>
<dbReference type="GO" id="GO:0000049">
    <property type="term" value="F:tRNA binding"/>
    <property type="evidence" value="ECO:0007669"/>
    <property type="project" value="UniProtKB-KW"/>
</dbReference>
<dbReference type="GO" id="GO:0103016">
    <property type="term" value="F:tRNA-uridine 2-sulfurtransferase activity"/>
    <property type="evidence" value="ECO:0007669"/>
    <property type="project" value="UniProtKB-EC"/>
</dbReference>
<dbReference type="GO" id="GO:0002143">
    <property type="term" value="P:tRNA wobble position uridine thiolation"/>
    <property type="evidence" value="ECO:0007669"/>
    <property type="project" value="TreeGrafter"/>
</dbReference>
<dbReference type="CDD" id="cd01998">
    <property type="entry name" value="MnmA_TRMU-like"/>
    <property type="match status" value="1"/>
</dbReference>
<dbReference type="FunFam" id="2.30.30.280:FF:000001">
    <property type="entry name" value="tRNA-specific 2-thiouridylase MnmA"/>
    <property type="match status" value="1"/>
</dbReference>
<dbReference type="FunFam" id="2.40.30.10:FF:000023">
    <property type="entry name" value="tRNA-specific 2-thiouridylase MnmA"/>
    <property type="match status" value="1"/>
</dbReference>
<dbReference type="FunFam" id="3.40.50.620:FF:000004">
    <property type="entry name" value="tRNA-specific 2-thiouridylase MnmA"/>
    <property type="match status" value="1"/>
</dbReference>
<dbReference type="Gene3D" id="2.30.30.280">
    <property type="entry name" value="Adenine nucleotide alpha hydrolases-like domains"/>
    <property type="match status" value="1"/>
</dbReference>
<dbReference type="Gene3D" id="3.40.50.620">
    <property type="entry name" value="HUPs"/>
    <property type="match status" value="1"/>
</dbReference>
<dbReference type="Gene3D" id="2.40.30.10">
    <property type="entry name" value="Translation factors"/>
    <property type="match status" value="1"/>
</dbReference>
<dbReference type="HAMAP" id="MF_00144">
    <property type="entry name" value="tRNA_thiouridyl_MnmA"/>
    <property type="match status" value="1"/>
</dbReference>
<dbReference type="InterPro" id="IPR004506">
    <property type="entry name" value="MnmA-like"/>
</dbReference>
<dbReference type="InterPro" id="IPR046885">
    <property type="entry name" value="MnmA-like_C"/>
</dbReference>
<dbReference type="InterPro" id="IPR046884">
    <property type="entry name" value="MnmA-like_central"/>
</dbReference>
<dbReference type="InterPro" id="IPR023382">
    <property type="entry name" value="MnmA-like_central_sf"/>
</dbReference>
<dbReference type="InterPro" id="IPR014729">
    <property type="entry name" value="Rossmann-like_a/b/a_fold"/>
</dbReference>
<dbReference type="NCBIfam" id="NF001138">
    <property type="entry name" value="PRK00143.1"/>
    <property type="match status" value="1"/>
</dbReference>
<dbReference type="NCBIfam" id="TIGR00420">
    <property type="entry name" value="trmU"/>
    <property type="match status" value="1"/>
</dbReference>
<dbReference type="PANTHER" id="PTHR11933:SF5">
    <property type="entry name" value="MITOCHONDRIAL TRNA-SPECIFIC 2-THIOURIDYLASE 1"/>
    <property type="match status" value="1"/>
</dbReference>
<dbReference type="PANTHER" id="PTHR11933">
    <property type="entry name" value="TRNA 5-METHYLAMINOMETHYL-2-THIOURIDYLATE -METHYLTRANSFERASE"/>
    <property type="match status" value="1"/>
</dbReference>
<dbReference type="Pfam" id="PF03054">
    <property type="entry name" value="tRNA_Me_trans"/>
    <property type="match status" value="1"/>
</dbReference>
<dbReference type="Pfam" id="PF20258">
    <property type="entry name" value="tRNA_Me_trans_C"/>
    <property type="match status" value="1"/>
</dbReference>
<dbReference type="Pfam" id="PF20259">
    <property type="entry name" value="tRNA_Me_trans_M"/>
    <property type="match status" value="1"/>
</dbReference>
<dbReference type="SUPFAM" id="SSF52402">
    <property type="entry name" value="Adenine nucleotide alpha hydrolases-like"/>
    <property type="match status" value="1"/>
</dbReference>
<gene>
    <name evidence="1" type="primary">mnmA</name>
    <name type="synonym">trmU</name>
    <name type="ordered locus">lwe1525</name>
</gene>
<proteinExistence type="inferred from homology"/>
<feature type="chain" id="PRO_1000009533" description="tRNA-specific 2-thiouridylase MnmA">
    <location>
        <begin position="1"/>
        <end position="371"/>
    </location>
</feature>
<feature type="region of interest" description="Interaction with target base in tRNA" evidence="1">
    <location>
        <begin position="99"/>
        <end position="101"/>
    </location>
</feature>
<feature type="region of interest" description="Interaction with tRNA" evidence="1">
    <location>
        <begin position="150"/>
        <end position="152"/>
    </location>
</feature>
<feature type="region of interest" description="Interaction with tRNA" evidence="1">
    <location>
        <begin position="308"/>
        <end position="309"/>
    </location>
</feature>
<feature type="active site" description="Nucleophile" evidence="1">
    <location>
        <position position="104"/>
    </location>
</feature>
<feature type="active site" description="Cysteine persulfide intermediate" evidence="1">
    <location>
        <position position="200"/>
    </location>
</feature>
<feature type="binding site" evidence="1">
    <location>
        <begin position="13"/>
        <end position="20"/>
    </location>
    <ligand>
        <name>ATP</name>
        <dbReference type="ChEBI" id="CHEBI:30616"/>
    </ligand>
</feature>
<feature type="binding site" evidence="1">
    <location>
        <position position="39"/>
    </location>
    <ligand>
        <name>ATP</name>
        <dbReference type="ChEBI" id="CHEBI:30616"/>
    </ligand>
</feature>
<feature type="binding site" evidence="1">
    <location>
        <position position="128"/>
    </location>
    <ligand>
        <name>ATP</name>
        <dbReference type="ChEBI" id="CHEBI:30616"/>
    </ligand>
</feature>
<feature type="site" description="Interaction with tRNA" evidence="1">
    <location>
        <position position="129"/>
    </location>
</feature>
<feature type="site" description="Interaction with tRNA" evidence="1">
    <location>
        <position position="341"/>
    </location>
</feature>
<feature type="disulfide bond" description="Alternate" evidence="1">
    <location>
        <begin position="104"/>
        <end position="200"/>
    </location>
</feature>
<evidence type="ECO:0000255" key="1">
    <source>
        <dbReference type="HAMAP-Rule" id="MF_00144"/>
    </source>
</evidence>
<comment type="function">
    <text evidence="1">Catalyzes the 2-thiolation of uridine at the wobble position (U34) of tRNA, leading to the formation of s(2)U34.</text>
</comment>
<comment type="catalytic activity">
    <reaction evidence="1">
        <text>S-sulfanyl-L-cysteinyl-[protein] + uridine(34) in tRNA + AH2 + ATP = 2-thiouridine(34) in tRNA + L-cysteinyl-[protein] + A + AMP + diphosphate + H(+)</text>
        <dbReference type="Rhea" id="RHEA:47032"/>
        <dbReference type="Rhea" id="RHEA-COMP:10131"/>
        <dbReference type="Rhea" id="RHEA-COMP:11726"/>
        <dbReference type="Rhea" id="RHEA-COMP:11727"/>
        <dbReference type="Rhea" id="RHEA-COMP:11728"/>
        <dbReference type="ChEBI" id="CHEBI:13193"/>
        <dbReference type="ChEBI" id="CHEBI:15378"/>
        <dbReference type="ChEBI" id="CHEBI:17499"/>
        <dbReference type="ChEBI" id="CHEBI:29950"/>
        <dbReference type="ChEBI" id="CHEBI:30616"/>
        <dbReference type="ChEBI" id="CHEBI:33019"/>
        <dbReference type="ChEBI" id="CHEBI:61963"/>
        <dbReference type="ChEBI" id="CHEBI:65315"/>
        <dbReference type="ChEBI" id="CHEBI:87170"/>
        <dbReference type="ChEBI" id="CHEBI:456215"/>
        <dbReference type="EC" id="2.8.1.13"/>
    </reaction>
</comment>
<comment type="subcellular location">
    <subcellularLocation>
        <location evidence="1">Cytoplasm</location>
    </subcellularLocation>
</comment>
<comment type="similarity">
    <text evidence="1">Belongs to the MnmA/TRMU family.</text>
</comment>
<organism>
    <name type="scientific">Listeria welshimeri serovar 6b (strain ATCC 35897 / DSM 20650 / CCUG 15529 / CIP 8149 / NCTC 11857 / SLCC 5334 / V8)</name>
    <dbReference type="NCBI Taxonomy" id="386043"/>
    <lineage>
        <taxon>Bacteria</taxon>
        <taxon>Bacillati</taxon>
        <taxon>Bacillota</taxon>
        <taxon>Bacilli</taxon>
        <taxon>Bacillales</taxon>
        <taxon>Listeriaceae</taxon>
        <taxon>Listeria</taxon>
    </lineage>
</organism>
<name>MNMA_LISW6</name>
<reference key="1">
    <citation type="journal article" date="2006" name="J. Bacteriol.">
        <title>Whole-genome sequence of Listeria welshimeri reveals common steps in genome reduction with Listeria innocua as compared to Listeria monocytogenes.</title>
        <authorList>
            <person name="Hain T."/>
            <person name="Steinweg C."/>
            <person name="Kuenne C.T."/>
            <person name="Billion A."/>
            <person name="Ghai R."/>
            <person name="Chatterjee S.S."/>
            <person name="Domann E."/>
            <person name="Kaerst U."/>
            <person name="Goesmann A."/>
            <person name="Bekel T."/>
            <person name="Bartels D."/>
            <person name="Kaiser O."/>
            <person name="Meyer F."/>
            <person name="Puehler A."/>
            <person name="Weisshaar B."/>
            <person name="Wehland J."/>
            <person name="Liang C."/>
            <person name="Dandekar T."/>
            <person name="Lampidis R."/>
            <person name="Kreft J."/>
            <person name="Goebel W."/>
            <person name="Chakraborty T."/>
        </authorList>
    </citation>
    <scope>NUCLEOTIDE SEQUENCE [LARGE SCALE GENOMIC DNA]</scope>
    <source>
        <strain>ATCC 35897 / DSM 20650 / CCUG 15529 / CIP 8149 / NCTC 11857 / SLCC 5334 / V8</strain>
    </source>
</reference>
<keyword id="KW-0067">ATP-binding</keyword>
<keyword id="KW-0963">Cytoplasm</keyword>
<keyword id="KW-1015">Disulfide bond</keyword>
<keyword id="KW-0547">Nucleotide-binding</keyword>
<keyword id="KW-0694">RNA-binding</keyword>
<keyword id="KW-0808">Transferase</keyword>
<keyword id="KW-0819">tRNA processing</keyword>
<keyword id="KW-0820">tRNA-binding</keyword>
<sequence length="371" mass="41439">MSTNNSDIRVVVGMSGGVDSSVTAHILKEQGYDVIGIFMKNWDDTDEFGVCTATEDYDDVIRVANQIGIPYYAVNFEKEYWDKVFTYFLEEYKLGRTPNPDVMCNKEIKFKAFLEHAESLGADYVATGHYAQVKKIGDEIELLRGVDNNKDQTYFLNQLSQDQLKKVMFPLGGMEKTEVREIATKAGLATANKKDSTGICFIGERNFKQFLSEYLPAQPGEMRTLDGEVLGKHDGLMYYTIGQRHGLGIGGDGEPWFVVGKDLKANVLFVEQGFHHESLYSDSLIATDISFTTNAEKPKTFECTAKFRYRQTDTKVTVHLRSDGTAEVVFADPVRAITPGQAVVFYDGDICLGGGTIDTVWKNEAKLDYVG</sequence>
<protein>
    <recommendedName>
        <fullName evidence="1">tRNA-specific 2-thiouridylase MnmA</fullName>
        <ecNumber evidence="1">2.8.1.13</ecNumber>
    </recommendedName>
</protein>
<accession>A0AIW1</accession>